<comment type="function">
    <text evidence="1">Found at the monomer-monomer interface of the photosystem II (PS II) dimer, plays a role in assembly and dimerization of PSII. PSII is a light-driven water plastoquinone oxidoreductase, using light energy to abstract electrons from H(2)O, generating a proton gradient subsequently used for ATP formation.</text>
</comment>
<comment type="subunit">
    <text evidence="1">PSII is composed of 1 copy each of membrane proteins PsbA, PsbB, PsbC, PsbD, PsbE, PsbF, PsbH, PsbI, PsbJ, PsbK, PsbL, PsbM, PsbT, PsbY, PsbZ, Psb30/Ycf12, at least 3 peripheral proteins of the oxygen-evolving complex and a large number of cofactors. It forms dimeric complexes.</text>
</comment>
<comment type="subcellular location">
    <subcellularLocation>
        <location evidence="1">Plastid</location>
        <location evidence="1">Chloroplast thylakoid membrane</location>
        <topology evidence="1">Single-pass membrane protein</topology>
    </subcellularLocation>
</comment>
<comment type="similarity">
    <text evidence="1">Belongs to the PsbT family.</text>
</comment>
<comment type="sequence caution" evidence="2">
    <conflict type="erroneous initiation">
        <sequence resource="EMBL-CDS" id="CAI53821"/>
    </conflict>
    <text>Extended N-terminus.</text>
</comment>
<protein>
    <recommendedName>
        <fullName evidence="1">Photosystem II reaction center protein T</fullName>
        <shortName evidence="1">PSII-T</shortName>
    </recommendedName>
</protein>
<feature type="chain" id="PRO_0000217892" description="Photosystem II reaction center protein T">
    <location>
        <begin position="1"/>
        <end position="35"/>
    </location>
</feature>
<feature type="transmembrane region" description="Helical" evidence="1">
    <location>
        <begin position="3"/>
        <end position="23"/>
    </location>
</feature>
<name>PSBT_ACOCL</name>
<organism>
    <name type="scientific">Acorus calamus</name>
    <name type="common">Sweet flag</name>
    <dbReference type="NCBI Taxonomy" id="4465"/>
    <lineage>
        <taxon>Eukaryota</taxon>
        <taxon>Viridiplantae</taxon>
        <taxon>Streptophyta</taxon>
        <taxon>Embryophyta</taxon>
        <taxon>Tracheophyta</taxon>
        <taxon>Spermatophyta</taxon>
        <taxon>Magnoliopsida</taxon>
        <taxon>Liliopsida</taxon>
        <taxon>Acoraceae</taxon>
        <taxon>Acorus</taxon>
    </lineage>
</organism>
<reference key="1">
    <citation type="journal article" date="2000" name="Am. J. Bot.">
        <title>Utility of 17 chloroplast genes for inferring the phylogeny of the basal angiosperms.</title>
        <authorList>
            <person name="Graham S.W."/>
            <person name="Olmstead R.G."/>
        </authorList>
    </citation>
    <scope>NUCLEOTIDE SEQUENCE [GENOMIC DNA]</scope>
</reference>
<reference key="2">
    <citation type="journal article" date="2005" name="Mol. Biol. Evol.">
        <title>Analysis of Acorus calamus chloroplast genome and its phylogenetic implications.</title>
        <authorList>
            <person name="Goremykin V.V."/>
            <person name="Holland B."/>
            <person name="Hirsch-Ernst K.I."/>
            <person name="Hellwig F.H."/>
        </authorList>
    </citation>
    <scope>NUCLEOTIDE SEQUENCE [LARGE SCALE GENOMIC DNA]</scope>
</reference>
<sequence>MEALVYTFLLVSTLGIIFFAIFFREPPKVPTKKMK</sequence>
<keyword id="KW-0150">Chloroplast</keyword>
<keyword id="KW-0472">Membrane</keyword>
<keyword id="KW-0602">Photosynthesis</keyword>
<keyword id="KW-0604">Photosystem II</keyword>
<keyword id="KW-0934">Plastid</keyword>
<keyword id="KW-0793">Thylakoid</keyword>
<keyword id="KW-0812">Transmembrane</keyword>
<keyword id="KW-1133">Transmembrane helix</keyword>
<accession>Q7J1A0</accession>
<accession>Q3V507</accession>
<gene>
    <name evidence="1" type="primary">psbT</name>
</gene>
<evidence type="ECO:0000255" key="1">
    <source>
        <dbReference type="HAMAP-Rule" id="MF_00808"/>
    </source>
</evidence>
<evidence type="ECO:0000305" key="2"/>
<dbReference type="EMBL" id="AF123843">
    <property type="protein sequence ID" value="AAG26251.1"/>
    <property type="molecule type" value="Genomic_DNA"/>
</dbReference>
<dbReference type="EMBL" id="AJ879453">
    <property type="protein sequence ID" value="CAI53821.1"/>
    <property type="status" value="ALT_INIT"/>
    <property type="molecule type" value="Genomic_DNA"/>
</dbReference>
<dbReference type="RefSeq" id="YP_319790.1">
    <property type="nucleotide sequence ID" value="NC_007407.1"/>
</dbReference>
<dbReference type="SMR" id="Q7J1A0"/>
<dbReference type="GeneID" id="3677475"/>
<dbReference type="GO" id="GO:0009535">
    <property type="term" value="C:chloroplast thylakoid membrane"/>
    <property type="evidence" value="ECO:0007669"/>
    <property type="project" value="UniProtKB-SubCell"/>
</dbReference>
<dbReference type="GO" id="GO:0009539">
    <property type="term" value="C:photosystem II reaction center"/>
    <property type="evidence" value="ECO:0007669"/>
    <property type="project" value="InterPro"/>
</dbReference>
<dbReference type="GO" id="GO:0015979">
    <property type="term" value="P:photosynthesis"/>
    <property type="evidence" value="ECO:0007669"/>
    <property type="project" value="UniProtKB-UniRule"/>
</dbReference>
<dbReference type="HAMAP" id="MF_00808">
    <property type="entry name" value="PSII_PsbT"/>
    <property type="match status" value="1"/>
</dbReference>
<dbReference type="InterPro" id="IPR001743">
    <property type="entry name" value="PSII_PsbT"/>
</dbReference>
<dbReference type="InterPro" id="IPR037268">
    <property type="entry name" value="PSII_PsbT_sf"/>
</dbReference>
<dbReference type="PANTHER" id="PTHR36411">
    <property type="match status" value="1"/>
</dbReference>
<dbReference type="PANTHER" id="PTHR36411:SF2">
    <property type="entry name" value="PHOTOSYSTEM II REACTION CENTER PROTEIN T"/>
    <property type="match status" value="1"/>
</dbReference>
<dbReference type="Pfam" id="PF01405">
    <property type="entry name" value="PsbT"/>
    <property type="match status" value="1"/>
</dbReference>
<dbReference type="SUPFAM" id="SSF161029">
    <property type="entry name" value="Photosystem II reaction center protein T, PsbT"/>
    <property type="match status" value="1"/>
</dbReference>
<geneLocation type="chloroplast"/>
<proteinExistence type="inferred from homology"/>